<reference key="1">
    <citation type="journal article" date="1999" name="Appl. Microbiol. Biotechnol.">
        <title>The NADP-dependent glutamate dehydrogenase gene from Penicillium chrysogenum and the construction of expression vectors for filamentous fungi.</title>
        <authorList>
            <person name="Diez B."/>
            <person name="Mellado E."/>
            <person name="Rodriguez M."/>
            <person name="Bernasconi E."/>
            <person name="Barredo J.L."/>
        </authorList>
    </citation>
    <scope>NUCLEOTIDE SEQUENCE [GENOMIC DNA]</scope>
</reference>
<gene>
    <name type="primary">GDH</name>
</gene>
<evidence type="ECO:0000250" key="1"/>
<evidence type="ECO:0000255" key="2">
    <source>
        <dbReference type="PROSITE-ProRule" id="PRU10011"/>
    </source>
</evidence>
<evidence type="ECO:0000305" key="3"/>
<dbReference type="EC" id="1.4.1.4"/>
<dbReference type="EMBL" id="AF056974">
    <property type="protein sequence ID" value="AAF00006.1"/>
    <property type="molecule type" value="Genomic_DNA"/>
</dbReference>
<dbReference type="SMR" id="Q9URS1"/>
<dbReference type="PhylomeDB" id="Q9URS1"/>
<dbReference type="GO" id="GO:0005829">
    <property type="term" value="C:cytosol"/>
    <property type="evidence" value="ECO:0007669"/>
    <property type="project" value="TreeGrafter"/>
</dbReference>
<dbReference type="GO" id="GO:0004354">
    <property type="term" value="F:glutamate dehydrogenase (NADP+) activity"/>
    <property type="evidence" value="ECO:0007669"/>
    <property type="project" value="UniProtKB-EC"/>
</dbReference>
<dbReference type="GO" id="GO:0006537">
    <property type="term" value="P:glutamate biosynthetic process"/>
    <property type="evidence" value="ECO:0007669"/>
    <property type="project" value="TreeGrafter"/>
</dbReference>
<dbReference type="CDD" id="cd05313">
    <property type="entry name" value="NAD_bind_2_Glu_DH"/>
    <property type="match status" value="1"/>
</dbReference>
<dbReference type="FunFam" id="1.10.285.10:FF:000001">
    <property type="entry name" value="Glutamate dehydrogenase"/>
    <property type="match status" value="1"/>
</dbReference>
<dbReference type="FunFam" id="1.10.285.10:FF:000003">
    <property type="entry name" value="Glutamate dehydrogenase"/>
    <property type="match status" value="1"/>
</dbReference>
<dbReference type="FunFam" id="3.40.50.10860:FF:000002">
    <property type="entry name" value="Glutamate dehydrogenase"/>
    <property type="match status" value="1"/>
</dbReference>
<dbReference type="FunFam" id="3.40.50.720:FF:000030">
    <property type="entry name" value="Glutamate dehydrogenase"/>
    <property type="match status" value="1"/>
</dbReference>
<dbReference type="Gene3D" id="1.10.285.10">
    <property type="entry name" value="Glutamate Dehydrogenase, chain A, domain 3"/>
    <property type="match status" value="2"/>
</dbReference>
<dbReference type="Gene3D" id="3.40.50.10860">
    <property type="entry name" value="Leucine Dehydrogenase, chain A, domain 1"/>
    <property type="match status" value="1"/>
</dbReference>
<dbReference type="Gene3D" id="3.40.50.720">
    <property type="entry name" value="NAD(P)-binding Rossmann-like Domain"/>
    <property type="match status" value="1"/>
</dbReference>
<dbReference type="InterPro" id="IPR046346">
    <property type="entry name" value="Aminoacid_DH-like_N_sf"/>
</dbReference>
<dbReference type="InterPro" id="IPR006095">
    <property type="entry name" value="Glu/Leu/Phe/Val/Trp_DH"/>
</dbReference>
<dbReference type="InterPro" id="IPR006096">
    <property type="entry name" value="Glu/Leu/Phe/Val/Trp_DH_C"/>
</dbReference>
<dbReference type="InterPro" id="IPR006097">
    <property type="entry name" value="Glu/Leu/Phe/Val/Trp_DH_dimer"/>
</dbReference>
<dbReference type="InterPro" id="IPR033524">
    <property type="entry name" value="Glu/Leu/Phe/Val_DH_AS"/>
</dbReference>
<dbReference type="InterPro" id="IPR014362">
    <property type="entry name" value="Glu_DH"/>
</dbReference>
<dbReference type="InterPro" id="IPR050724">
    <property type="entry name" value="Glu_Leu_Phe_Val_DH"/>
</dbReference>
<dbReference type="InterPro" id="IPR036291">
    <property type="entry name" value="NAD(P)-bd_dom_sf"/>
</dbReference>
<dbReference type="InterPro" id="IPR033922">
    <property type="entry name" value="NAD_bind_Glu_DH"/>
</dbReference>
<dbReference type="NCBIfam" id="NF006929">
    <property type="entry name" value="PRK09414.1"/>
    <property type="match status" value="1"/>
</dbReference>
<dbReference type="PANTHER" id="PTHR43571">
    <property type="entry name" value="NADP-SPECIFIC GLUTAMATE DEHYDROGENASE 1-RELATED"/>
    <property type="match status" value="1"/>
</dbReference>
<dbReference type="PANTHER" id="PTHR43571:SF1">
    <property type="entry name" value="NADP-SPECIFIC GLUTAMATE DEHYDROGENASE 1-RELATED"/>
    <property type="match status" value="1"/>
</dbReference>
<dbReference type="Pfam" id="PF00208">
    <property type="entry name" value="ELFV_dehydrog"/>
    <property type="match status" value="1"/>
</dbReference>
<dbReference type="Pfam" id="PF02812">
    <property type="entry name" value="ELFV_dehydrog_N"/>
    <property type="match status" value="1"/>
</dbReference>
<dbReference type="PIRSF" id="PIRSF000185">
    <property type="entry name" value="Glu_DH"/>
    <property type="match status" value="1"/>
</dbReference>
<dbReference type="PRINTS" id="PR00082">
    <property type="entry name" value="GLFDHDRGNASE"/>
</dbReference>
<dbReference type="SMART" id="SM00839">
    <property type="entry name" value="ELFV_dehydrog"/>
    <property type="match status" value="1"/>
</dbReference>
<dbReference type="SUPFAM" id="SSF53223">
    <property type="entry name" value="Aminoacid dehydrogenase-like, N-terminal domain"/>
    <property type="match status" value="1"/>
</dbReference>
<dbReference type="SUPFAM" id="SSF51735">
    <property type="entry name" value="NAD(P)-binding Rossmann-fold domains"/>
    <property type="match status" value="1"/>
</dbReference>
<dbReference type="PROSITE" id="PS00074">
    <property type="entry name" value="GLFV_DEHYDROGENASE"/>
    <property type="match status" value="1"/>
</dbReference>
<feature type="chain" id="PRO_0000182793" description="NADP-specific glutamate dehydrogenase">
    <location>
        <begin position="1"/>
        <end position="461"/>
    </location>
</feature>
<feature type="active site" evidence="2">
    <location>
        <position position="115"/>
    </location>
</feature>
<protein>
    <recommendedName>
        <fullName>NADP-specific glutamate dehydrogenase</fullName>
        <shortName>NADP-GDH</shortName>
        <ecNumber>1.4.1.4</ecNumber>
    </recommendedName>
    <alternativeName>
        <fullName>NADP-dependent glutamate dehydrogenase</fullName>
    </alternativeName>
</protein>
<name>DHE4_PENCH</name>
<organism>
    <name type="scientific">Penicillium chrysogenum</name>
    <name type="common">Penicillium notatum</name>
    <dbReference type="NCBI Taxonomy" id="5076"/>
    <lineage>
        <taxon>Eukaryota</taxon>
        <taxon>Fungi</taxon>
        <taxon>Dikarya</taxon>
        <taxon>Ascomycota</taxon>
        <taxon>Pezizomycotina</taxon>
        <taxon>Eurotiomycetes</taxon>
        <taxon>Eurotiomycetidae</taxon>
        <taxon>Eurotiales</taxon>
        <taxon>Aspergillaceae</taxon>
        <taxon>Penicillium</taxon>
        <taxon>Penicillium chrysogenum species complex</taxon>
    </lineage>
</organism>
<comment type="catalytic activity">
    <reaction>
        <text>L-glutamate + NADP(+) + H2O = 2-oxoglutarate + NH4(+) + NADPH + H(+)</text>
        <dbReference type="Rhea" id="RHEA:11612"/>
        <dbReference type="ChEBI" id="CHEBI:15377"/>
        <dbReference type="ChEBI" id="CHEBI:15378"/>
        <dbReference type="ChEBI" id="CHEBI:16810"/>
        <dbReference type="ChEBI" id="CHEBI:28938"/>
        <dbReference type="ChEBI" id="CHEBI:29985"/>
        <dbReference type="ChEBI" id="CHEBI:57783"/>
        <dbReference type="ChEBI" id="CHEBI:58349"/>
        <dbReference type="EC" id="1.4.1.4"/>
    </reaction>
</comment>
<comment type="subunit">
    <text evidence="1">Homohexamer.</text>
</comment>
<comment type="similarity">
    <text evidence="3">Belongs to the Glu/Leu/Phe/Val dehydrogenases family.</text>
</comment>
<keyword id="KW-0521">NADP</keyword>
<keyword id="KW-0560">Oxidoreductase</keyword>
<sequence>MMQNLPFEPEFEQAYKELASTLENSTLFQKKPEYRKALQVVSVPERVIQFRVVWEDDKGQVQINRGYRVQFNSALGPYKGGLRFHPTVNLSILKFLGFEQIFKNALTGLNMGGGKGGSDFDPKGKTDNEIRRFCVSFMTELCKHIGADTDVPAGDIGVTGREVGFMFGQYKKIRNQWEGVLTGKGGSWGGSLIRPEATGYGVVYYVEHMIQHASGGKESFAGKRVAISGSGNVAQYAALKVIELGGSVISLSDSQGALVLNGEEGSFTAEEINTIAEIKVQRKQIAELATQDAFSSKFKYIPGARPWTNIAGRIDVALPSATQNEVSGDEAKALIAAGCKFIAEGSNMGSTQEAIDVFEAHRDANPGAAAIWYAPGKAANAGGVAVSGLEMAQNSARVNWSREEVDSRLKKIMEDCFNNGLSTAKEYVTPAEGVLPSLVAGSNIAGFTKVAEAMKEHGDWW</sequence>
<proteinExistence type="inferred from homology"/>
<accession>Q9URS1</accession>